<keyword id="KW-1185">Reference proteome</keyword>
<keyword id="KW-0687">Ribonucleoprotein</keyword>
<keyword id="KW-0689">Ribosomal protein</keyword>
<proteinExistence type="inferred from homology"/>
<evidence type="ECO:0000255" key="1">
    <source>
        <dbReference type="HAMAP-Rule" id="MF_00374"/>
    </source>
</evidence>
<evidence type="ECO:0000305" key="2"/>
<gene>
    <name evidence="1" type="primary">rpmC</name>
    <name type="ordered locus">Mpe_A3435</name>
</gene>
<name>RL29_METPP</name>
<dbReference type="EMBL" id="CP000555">
    <property type="protein sequence ID" value="ABM96388.1"/>
    <property type="molecule type" value="Genomic_DNA"/>
</dbReference>
<dbReference type="RefSeq" id="WP_011831009.1">
    <property type="nucleotide sequence ID" value="NC_008825.1"/>
</dbReference>
<dbReference type="SMR" id="A2SLE9"/>
<dbReference type="STRING" id="420662.Mpe_A3435"/>
<dbReference type="KEGG" id="mpt:Mpe_A3435"/>
<dbReference type="eggNOG" id="COG0255">
    <property type="taxonomic scope" value="Bacteria"/>
</dbReference>
<dbReference type="HOGENOM" id="CLU_158491_1_1_4"/>
<dbReference type="Proteomes" id="UP000000366">
    <property type="component" value="Chromosome"/>
</dbReference>
<dbReference type="GO" id="GO:1990904">
    <property type="term" value="C:ribonucleoprotein complex"/>
    <property type="evidence" value="ECO:0007669"/>
    <property type="project" value="UniProtKB-KW"/>
</dbReference>
<dbReference type="GO" id="GO:0005840">
    <property type="term" value="C:ribosome"/>
    <property type="evidence" value="ECO:0007669"/>
    <property type="project" value="UniProtKB-KW"/>
</dbReference>
<dbReference type="GO" id="GO:0003735">
    <property type="term" value="F:structural constituent of ribosome"/>
    <property type="evidence" value="ECO:0007669"/>
    <property type="project" value="InterPro"/>
</dbReference>
<dbReference type="GO" id="GO:0006412">
    <property type="term" value="P:translation"/>
    <property type="evidence" value="ECO:0007669"/>
    <property type="project" value="UniProtKB-UniRule"/>
</dbReference>
<dbReference type="CDD" id="cd00427">
    <property type="entry name" value="Ribosomal_L29_HIP"/>
    <property type="match status" value="1"/>
</dbReference>
<dbReference type="FunFam" id="1.10.287.310:FF:000001">
    <property type="entry name" value="50S ribosomal protein L29"/>
    <property type="match status" value="1"/>
</dbReference>
<dbReference type="Gene3D" id="1.10.287.310">
    <property type="match status" value="1"/>
</dbReference>
<dbReference type="HAMAP" id="MF_00374">
    <property type="entry name" value="Ribosomal_uL29"/>
    <property type="match status" value="1"/>
</dbReference>
<dbReference type="InterPro" id="IPR001854">
    <property type="entry name" value="Ribosomal_uL29"/>
</dbReference>
<dbReference type="InterPro" id="IPR018254">
    <property type="entry name" value="Ribosomal_uL29_CS"/>
</dbReference>
<dbReference type="InterPro" id="IPR036049">
    <property type="entry name" value="Ribosomal_uL29_sf"/>
</dbReference>
<dbReference type="NCBIfam" id="TIGR00012">
    <property type="entry name" value="L29"/>
    <property type="match status" value="1"/>
</dbReference>
<dbReference type="Pfam" id="PF00831">
    <property type="entry name" value="Ribosomal_L29"/>
    <property type="match status" value="1"/>
</dbReference>
<dbReference type="SUPFAM" id="SSF46561">
    <property type="entry name" value="Ribosomal protein L29 (L29p)"/>
    <property type="match status" value="1"/>
</dbReference>
<dbReference type="PROSITE" id="PS00579">
    <property type="entry name" value="RIBOSOMAL_L29"/>
    <property type="match status" value="1"/>
</dbReference>
<comment type="similarity">
    <text evidence="1">Belongs to the universal ribosomal protein uL29 family.</text>
</comment>
<reference key="1">
    <citation type="journal article" date="2007" name="J. Bacteriol.">
        <title>Whole-genome analysis of the methyl tert-butyl ether-degrading beta-proteobacterium Methylibium petroleiphilum PM1.</title>
        <authorList>
            <person name="Kane S.R."/>
            <person name="Chakicherla A.Y."/>
            <person name="Chain P.S.G."/>
            <person name="Schmidt R."/>
            <person name="Shin M.W."/>
            <person name="Legler T.C."/>
            <person name="Scow K.M."/>
            <person name="Larimer F.W."/>
            <person name="Lucas S.M."/>
            <person name="Richardson P.M."/>
            <person name="Hristova K.R."/>
        </authorList>
    </citation>
    <scope>NUCLEOTIDE SEQUENCE [LARGE SCALE GENOMIC DNA]</scope>
    <source>
        <strain>ATCC BAA-1232 / LMG 22953 / PM1</strain>
    </source>
</reference>
<sequence>MKASELRAKDVAALEQEVKDLLKAHFGLRMQKGTQQLGNTASLRLTRRDIARAKTILAEKKKGAAQ</sequence>
<protein>
    <recommendedName>
        <fullName evidence="1">Large ribosomal subunit protein uL29</fullName>
    </recommendedName>
    <alternativeName>
        <fullName evidence="2">50S ribosomal protein L29</fullName>
    </alternativeName>
</protein>
<accession>A2SLE9</accession>
<feature type="chain" id="PRO_1000007522" description="Large ribosomal subunit protein uL29">
    <location>
        <begin position="1"/>
        <end position="66"/>
    </location>
</feature>
<organism>
    <name type="scientific">Methylibium petroleiphilum (strain ATCC BAA-1232 / LMG 22953 / PM1)</name>
    <dbReference type="NCBI Taxonomy" id="420662"/>
    <lineage>
        <taxon>Bacteria</taxon>
        <taxon>Pseudomonadati</taxon>
        <taxon>Pseudomonadota</taxon>
        <taxon>Betaproteobacteria</taxon>
        <taxon>Burkholderiales</taxon>
        <taxon>Sphaerotilaceae</taxon>
        <taxon>Methylibium</taxon>
    </lineage>
</organism>